<protein>
    <recommendedName>
        <fullName evidence="1">Uracil-DNA glycosylase</fullName>
        <shortName evidence="1">UDG</shortName>
        <ecNumber evidence="1">3.2.2.27</ecNumber>
    </recommendedName>
</protein>
<evidence type="ECO:0000255" key="1">
    <source>
        <dbReference type="HAMAP-Rule" id="MF_00148"/>
    </source>
</evidence>
<gene>
    <name evidence="1" type="primary">ung</name>
    <name type="ordered locus">ACICU_01614</name>
</gene>
<reference key="1">
    <citation type="journal article" date="2008" name="Antimicrob. Agents Chemother.">
        <title>Whole-genome pyrosequencing of an epidemic multidrug-resistant Acinetobacter baumannii strain belonging to the European clone II group.</title>
        <authorList>
            <person name="Iacono M."/>
            <person name="Villa L."/>
            <person name="Fortini D."/>
            <person name="Bordoni R."/>
            <person name="Imperi F."/>
            <person name="Bonnal R.J."/>
            <person name="Sicheritz-Ponten T."/>
            <person name="De Bellis G."/>
            <person name="Visca P."/>
            <person name="Cassone A."/>
            <person name="Carattoli A."/>
        </authorList>
    </citation>
    <scope>NUCLEOTIDE SEQUENCE [LARGE SCALE GENOMIC DNA]</scope>
    <source>
        <strain>ACICU</strain>
    </source>
</reference>
<keyword id="KW-0963">Cytoplasm</keyword>
<keyword id="KW-0227">DNA damage</keyword>
<keyword id="KW-0234">DNA repair</keyword>
<keyword id="KW-0378">Hydrolase</keyword>
<proteinExistence type="inferred from homology"/>
<feature type="chain" id="PRO_1000096556" description="Uracil-DNA glycosylase">
    <location>
        <begin position="1"/>
        <end position="237"/>
    </location>
</feature>
<feature type="active site" description="Proton acceptor" evidence="1">
    <location>
        <position position="77"/>
    </location>
</feature>
<comment type="function">
    <text evidence="1">Excises uracil residues from the DNA which can arise as a result of misincorporation of dUMP residues by DNA polymerase or due to deamination of cytosine.</text>
</comment>
<comment type="catalytic activity">
    <reaction evidence="1">
        <text>Hydrolyzes single-stranded DNA or mismatched double-stranded DNA and polynucleotides, releasing free uracil.</text>
        <dbReference type="EC" id="3.2.2.27"/>
    </reaction>
</comment>
<comment type="subcellular location">
    <subcellularLocation>
        <location evidence="1">Cytoplasm</location>
    </subcellularLocation>
</comment>
<comment type="similarity">
    <text evidence="1">Belongs to the uracil-DNA glycosylase (UDG) superfamily. UNG family.</text>
</comment>
<accession>B2HZE0</accession>
<dbReference type="EC" id="3.2.2.27" evidence="1"/>
<dbReference type="EMBL" id="CP000863">
    <property type="protein sequence ID" value="ACC56926.1"/>
    <property type="molecule type" value="Genomic_DNA"/>
</dbReference>
<dbReference type="RefSeq" id="WP_001177528.1">
    <property type="nucleotide sequence ID" value="NZ_CP031380.1"/>
</dbReference>
<dbReference type="SMR" id="B2HZE0"/>
<dbReference type="KEGG" id="abc:ACICU_01614"/>
<dbReference type="HOGENOM" id="CLU_032162_3_0_6"/>
<dbReference type="Proteomes" id="UP000008839">
    <property type="component" value="Chromosome"/>
</dbReference>
<dbReference type="GO" id="GO:0005737">
    <property type="term" value="C:cytoplasm"/>
    <property type="evidence" value="ECO:0007669"/>
    <property type="project" value="UniProtKB-SubCell"/>
</dbReference>
<dbReference type="GO" id="GO:0004844">
    <property type="term" value="F:uracil DNA N-glycosylase activity"/>
    <property type="evidence" value="ECO:0007669"/>
    <property type="project" value="UniProtKB-UniRule"/>
</dbReference>
<dbReference type="GO" id="GO:0097510">
    <property type="term" value="P:base-excision repair, AP site formation via deaminated base removal"/>
    <property type="evidence" value="ECO:0007669"/>
    <property type="project" value="TreeGrafter"/>
</dbReference>
<dbReference type="CDD" id="cd10027">
    <property type="entry name" value="UDG-F1-like"/>
    <property type="match status" value="1"/>
</dbReference>
<dbReference type="FunFam" id="3.40.470.10:FF:000001">
    <property type="entry name" value="Uracil-DNA glycosylase"/>
    <property type="match status" value="1"/>
</dbReference>
<dbReference type="Gene3D" id="3.40.470.10">
    <property type="entry name" value="Uracil-DNA glycosylase-like domain"/>
    <property type="match status" value="1"/>
</dbReference>
<dbReference type="HAMAP" id="MF_00148">
    <property type="entry name" value="UDG"/>
    <property type="match status" value="1"/>
</dbReference>
<dbReference type="InterPro" id="IPR002043">
    <property type="entry name" value="UDG_fam1"/>
</dbReference>
<dbReference type="InterPro" id="IPR018085">
    <property type="entry name" value="Ura-DNA_Glyclase_AS"/>
</dbReference>
<dbReference type="InterPro" id="IPR005122">
    <property type="entry name" value="Uracil-DNA_glycosylase-like"/>
</dbReference>
<dbReference type="InterPro" id="IPR036895">
    <property type="entry name" value="Uracil-DNA_glycosylase-like_sf"/>
</dbReference>
<dbReference type="NCBIfam" id="NF003588">
    <property type="entry name" value="PRK05254.1-1"/>
    <property type="match status" value="1"/>
</dbReference>
<dbReference type="NCBIfam" id="NF003589">
    <property type="entry name" value="PRK05254.1-2"/>
    <property type="match status" value="1"/>
</dbReference>
<dbReference type="NCBIfam" id="NF003591">
    <property type="entry name" value="PRK05254.1-4"/>
    <property type="match status" value="1"/>
</dbReference>
<dbReference type="NCBIfam" id="NF003592">
    <property type="entry name" value="PRK05254.1-5"/>
    <property type="match status" value="1"/>
</dbReference>
<dbReference type="NCBIfam" id="TIGR00628">
    <property type="entry name" value="ung"/>
    <property type="match status" value="1"/>
</dbReference>
<dbReference type="PANTHER" id="PTHR11264">
    <property type="entry name" value="URACIL-DNA GLYCOSYLASE"/>
    <property type="match status" value="1"/>
</dbReference>
<dbReference type="PANTHER" id="PTHR11264:SF0">
    <property type="entry name" value="URACIL-DNA GLYCOSYLASE"/>
    <property type="match status" value="1"/>
</dbReference>
<dbReference type="Pfam" id="PF03167">
    <property type="entry name" value="UDG"/>
    <property type="match status" value="1"/>
</dbReference>
<dbReference type="SMART" id="SM00986">
    <property type="entry name" value="UDG"/>
    <property type="match status" value="1"/>
</dbReference>
<dbReference type="SMART" id="SM00987">
    <property type="entry name" value="UreE_C"/>
    <property type="match status" value="1"/>
</dbReference>
<dbReference type="SUPFAM" id="SSF52141">
    <property type="entry name" value="Uracil-DNA glycosylase-like"/>
    <property type="match status" value="1"/>
</dbReference>
<dbReference type="PROSITE" id="PS00130">
    <property type="entry name" value="U_DNA_GLYCOSYLASE"/>
    <property type="match status" value="1"/>
</dbReference>
<name>UNG_ACIBC</name>
<sequence length="237" mass="26922">MQLTEQQQDKLSKVQLEESWKRSLTPFLLSPYMDSLRDFLFQQKQAQKTIYPPSKQIFNALNITPLDHVKVVILGQDPYHGPNQANGLSFSVQRGVALPPSLRNIFHELHTDLGVPVSRHGDLTKWAEQGVLLLNSVLTVEAGQPTSHQKQGWEEFTDAVIDVLNEQREHIVFILWGAYAQRKGQRINREKHLVLTAAHPSPLAANRGGFFGCKVFSKTNQYLKQHGIEPIDWQLDA</sequence>
<organism>
    <name type="scientific">Acinetobacter baumannii (strain ACICU)</name>
    <dbReference type="NCBI Taxonomy" id="405416"/>
    <lineage>
        <taxon>Bacteria</taxon>
        <taxon>Pseudomonadati</taxon>
        <taxon>Pseudomonadota</taxon>
        <taxon>Gammaproteobacteria</taxon>
        <taxon>Moraxellales</taxon>
        <taxon>Moraxellaceae</taxon>
        <taxon>Acinetobacter</taxon>
        <taxon>Acinetobacter calcoaceticus/baumannii complex</taxon>
    </lineage>
</organism>